<feature type="chain" id="PRO_1000203644" description="Translational regulator CsrA">
    <location>
        <begin position="1"/>
        <end position="82"/>
    </location>
</feature>
<reference key="1">
    <citation type="submission" date="2009-06" db="EMBL/GenBank/DDBJ databases">
        <title>Complete sequence of chromosome of Geopacillus sp. WCH70.</title>
        <authorList>
            <consortium name="US DOE Joint Genome Institute"/>
            <person name="Lucas S."/>
            <person name="Copeland A."/>
            <person name="Lapidus A."/>
            <person name="Glavina del Rio T."/>
            <person name="Dalin E."/>
            <person name="Tice H."/>
            <person name="Bruce D."/>
            <person name="Goodwin L."/>
            <person name="Pitluck S."/>
            <person name="Chertkov O."/>
            <person name="Brettin T."/>
            <person name="Detter J.C."/>
            <person name="Han C."/>
            <person name="Larimer F."/>
            <person name="Land M."/>
            <person name="Hauser L."/>
            <person name="Kyrpides N."/>
            <person name="Mikhailova N."/>
            <person name="Brumm P."/>
            <person name="Mead D.A."/>
            <person name="Richardson P."/>
        </authorList>
    </citation>
    <scope>NUCLEOTIDE SEQUENCE [LARGE SCALE GENOMIC DNA]</scope>
    <source>
        <strain>WCH70</strain>
    </source>
</reference>
<keyword id="KW-1005">Bacterial flagellum biogenesis</keyword>
<keyword id="KW-0963">Cytoplasm</keyword>
<keyword id="KW-0678">Repressor</keyword>
<keyword id="KW-0694">RNA-binding</keyword>
<keyword id="KW-0810">Translation regulation</keyword>
<evidence type="ECO:0000255" key="1">
    <source>
        <dbReference type="HAMAP-Rule" id="MF_00167"/>
    </source>
</evidence>
<name>CSRA_GEOSW</name>
<gene>
    <name evidence="1" type="primary">csrA</name>
    <name type="ordered locus">GWCH70_3026</name>
</gene>
<dbReference type="EMBL" id="CP001638">
    <property type="protein sequence ID" value="ACS25694.1"/>
    <property type="molecule type" value="Genomic_DNA"/>
</dbReference>
<dbReference type="SMR" id="C5D7T4"/>
<dbReference type="STRING" id="471223.GWCH70_3026"/>
<dbReference type="KEGG" id="gwc:GWCH70_3026"/>
<dbReference type="eggNOG" id="COG1551">
    <property type="taxonomic scope" value="Bacteria"/>
</dbReference>
<dbReference type="HOGENOM" id="CLU_164837_0_2_9"/>
<dbReference type="OrthoDB" id="9809061at2"/>
<dbReference type="GO" id="GO:0005829">
    <property type="term" value="C:cytosol"/>
    <property type="evidence" value="ECO:0007669"/>
    <property type="project" value="TreeGrafter"/>
</dbReference>
<dbReference type="GO" id="GO:0048027">
    <property type="term" value="F:mRNA 5'-UTR binding"/>
    <property type="evidence" value="ECO:0007669"/>
    <property type="project" value="UniProtKB-UniRule"/>
</dbReference>
<dbReference type="GO" id="GO:0044781">
    <property type="term" value="P:bacterial-type flagellum organization"/>
    <property type="evidence" value="ECO:0007669"/>
    <property type="project" value="UniProtKB-KW"/>
</dbReference>
<dbReference type="GO" id="GO:0006402">
    <property type="term" value="P:mRNA catabolic process"/>
    <property type="evidence" value="ECO:0007669"/>
    <property type="project" value="InterPro"/>
</dbReference>
<dbReference type="GO" id="GO:0045947">
    <property type="term" value="P:negative regulation of translational initiation"/>
    <property type="evidence" value="ECO:0007669"/>
    <property type="project" value="UniProtKB-UniRule"/>
</dbReference>
<dbReference type="GO" id="GO:1902208">
    <property type="term" value="P:regulation of bacterial-type flagellum assembly"/>
    <property type="evidence" value="ECO:0007669"/>
    <property type="project" value="UniProtKB-UniRule"/>
</dbReference>
<dbReference type="GO" id="GO:0006109">
    <property type="term" value="P:regulation of carbohydrate metabolic process"/>
    <property type="evidence" value="ECO:0007669"/>
    <property type="project" value="InterPro"/>
</dbReference>
<dbReference type="FunFam" id="2.60.40.4380:FF:000002">
    <property type="entry name" value="Translational regulator CsrA"/>
    <property type="match status" value="1"/>
</dbReference>
<dbReference type="Gene3D" id="2.60.40.4380">
    <property type="entry name" value="Translational regulator CsrA"/>
    <property type="match status" value="1"/>
</dbReference>
<dbReference type="HAMAP" id="MF_00167">
    <property type="entry name" value="CsrA"/>
    <property type="match status" value="1"/>
</dbReference>
<dbReference type="InterPro" id="IPR003751">
    <property type="entry name" value="CsrA"/>
</dbReference>
<dbReference type="InterPro" id="IPR036107">
    <property type="entry name" value="CsrA_sf"/>
</dbReference>
<dbReference type="NCBIfam" id="TIGR00202">
    <property type="entry name" value="csrA"/>
    <property type="match status" value="1"/>
</dbReference>
<dbReference type="NCBIfam" id="NF002469">
    <property type="entry name" value="PRK01712.1"/>
    <property type="match status" value="1"/>
</dbReference>
<dbReference type="PANTHER" id="PTHR34984">
    <property type="entry name" value="CARBON STORAGE REGULATOR"/>
    <property type="match status" value="1"/>
</dbReference>
<dbReference type="PANTHER" id="PTHR34984:SF1">
    <property type="entry name" value="CARBON STORAGE REGULATOR"/>
    <property type="match status" value="1"/>
</dbReference>
<dbReference type="Pfam" id="PF02599">
    <property type="entry name" value="CsrA"/>
    <property type="match status" value="1"/>
</dbReference>
<dbReference type="SUPFAM" id="SSF117130">
    <property type="entry name" value="CsrA-like"/>
    <property type="match status" value="1"/>
</dbReference>
<sequence length="82" mass="9140">MLVLTRKLKEVIQIGDDIEITVLAIQGDQVKLGINAPKHVEIHRKEIYLAIQAENNAASLASKTSLEQLNEQLKHWKGGKQA</sequence>
<accession>C5D7T4</accession>
<comment type="function">
    <text evidence="1">A translational regulator that binds mRNA to regulate translation initiation and/or mRNA stability. Usually binds in the 5'-UTR at or near the Shine-Dalgarno sequence preventing ribosome-binding, thus repressing translation. Its main target seems to be the major flagellin gene, while its function is anatagonized by FliW.</text>
</comment>
<comment type="subunit">
    <text evidence="1">Homodimer; the beta-strands of each monomer intercalate to form a hydrophobic core, while the alpha-helices form wings that extend away from the core.</text>
</comment>
<comment type="subcellular location">
    <subcellularLocation>
        <location evidence="1">Cytoplasm</location>
    </subcellularLocation>
</comment>
<comment type="similarity">
    <text evidence="1">Belongs to the CsrA/RsmA family.</text>
</comment>
<proteinExistence type="inferred from homology"/>
<organism>
    <name type="scientific">Geobacillus sp. (strain WCH70)</name>
    <dbReference type="NCBI Taxonomy" id="471223"/>
    <lineage>
        <taxon>Bacteria</taxon>
        <taxon>Bacillati</taxon>
        <taxon>Bacillota</taxon>
        <taxon>Bacilli</taxon>
        <taxon>Bacillales</taxon>
        <taxon>Anoxybacillaceae</taxon>
        <taxon>Geobacillus</taxon>
    </lineage>
</organism>
<protein>
    <recommendedName>
        <fullName evidence="1">Translational regulator CsrA</fullName>
    </recommendedName>
</protein>